<keyword id="KW-0378">Hydrolase</keyword>
<keyword id="KW-0464">Manganese</keyword>
<keyword id="KW-1185">Reference proteome</keyword>
<feature type="chain" id="PRO_1000073537" description="Adenine deaminase">
    <location>
        <begin position="1"/>
        <end position="588"/>
    </location>
</feature>
<proteinExistence type="inferred from homology"/>
<dbReference type="EC" id="3.5.4.2" evidence="1"/>
<dbReference type="EMBL" id="CP000612">
    <property type="protein sequence ID" value="ABO51275.1"/>
    <property type="molecule type" value="Genomic_DNA"/>
</dbReference>
<dbReference type="RefSeq" id="WP_011879070.1">
    <property type="nucleotide sequence ID" value="NC_009253.1"/>
</dbReference>
<dbReference type="SMR" id="A4J872"/>
<dbReference type="STRING" id="349161.Dred_2771"/>
<dbReference type="KEGG" id="drm:Dred_2771"/>
<dbReference type="eggNOG" id="COG1001">
    <property type="taxonomic scope" value="Bacteria"/>
</dbReference>
<dbReference type="HOGENOM" id="CLU_027935_0_0_9"/>
<dbReference type="OrthoDB" id="9775607at2"/>
<dbReference type="Proteomes" id="UP000001556">
    <property type="component" value="Chromosome"/>
</dbReference>
<dbReference type="GO" id="GO:0000034">
    <property type="term" value="F:adenine deaminase activity"/>
    <property type="evidence" value="ECO:0007669"/>
    <property type="project" value="UniProtKB-UniRule"/>
</dbReference>
<dbReference type="GO" id="GO:0006146">
    <property type="term" value="P:adenine catabolic process"/>
    <property type="evidence" value="ECO:0007669"/>
    <property type="project" value="InterPro"/>
</dbReference>
<dbReference type="CDD" id="cd01295">
    <property type="entry name" value="AdeC"/>
    <property type="match status" value="1"/>
</dbReference>
<dbReference type="Gene3D" id="3.20.20.140">
    <property type="entry name" value="Metal-dependent hydrolases"/>
    <property type="match status" value="1"/>
</dbReference>
<dbReference type="Gene3D" id="2.30.40.10">
    <property type="entry name" value="Urease, subunit C, domain 1"/>
    <property type="match status" value="1"/>
</dbReference>
<dbReference type="HAMAP" id="MF_01518">
    <property type="entry name" value="Adenine_deamin"/>
    <property type="match status" value="1"/>
</dbReference>
<dbReference type="InterPro" id="IPR006679">
    <property type="entry name" value="Adenine_deam"/>
</dbReference>
<dbReference type="InterPro" id="IPR026912">
    <property type="entry name" value="Adenine_deam_C"/>
</dbReference>
<dbReference type="InterPro" id="IPR006680">
    <property type="entry name" value="Amidohydro-rel"/>
</dbReference>
<dbReference type="InterPro" id="IPR011059">
    <property type="entry name" value="Metal-dep_hydrolase_composite"/>
</dbReference>
<dbReference type="InterPro" id="IPR032466">
    <property type="entry name" value="Metal_Hydrolase"/>
</dbReference>
<dbReference type="NCBIfam" id="TIGR01178">
    <property type="entry name" value="ade"/>
    <property type="match status" value="1"/>
</dbReference>
<dbReference type="PANTHER" id="PTHR11113:SF2">
    <property type="entry name" value="ADENINE DEAMINASE"/>
    <property type="match status" value="1"/>
</dbReference>
<dbReference type="PANTHER" id="PTHR11113">
    <property type="entry name" value="N-ACETYLGLUCOSAMINE-6-PHOSPHATE DEACETYLASE"/>
    <property type="match status" value="1"/>
</dbReference>
<dbReference type="Pfam" id="PF13382">
    <property type="entry name" value="Adenine_deam_C"/>
    <property type="match status" value="1"/>
</dbReference>
<dbReference type="Pfam" id="PF01979">
    <property type="entry name" value="Amidohydro_1"/>
    <property type="match status" value="1"/>
</dbReference>
<dbReference type="SUPFAM" id="SSF51338">
    <property type="entry name" value="Composite domain of metallo-dependent hydrolases"/>
    <property type="match status" value="1"/>
</dbReference>
<dbReference type="SUPFAM" id="SSF51556">
    <property type="entry name" value="Metallo-dependent hydrolases"/>
    <property type="match status" value="1"/>
</dbReference>
<protein>
    <recommendedName>
        <fullName evidence="1">Adenine deaminase</fullName>
        <shortName evidence="1">Adenase</shortName>
        <shortName evidence="1">Adenine aminase</shortName>
        <ecNumber evidence="1">3.5.4.2</ecNumber>
    </recommendedName>
</protein>
<organism>
    <name type="scientific">Desulforamulus reducens (strain ATCC BAA-1160 / DSM 100696 / MI-1)</name>
    <name type="common">Desulfotomaculum reducens</name>
    <dbReference type="NCBI Taxonomy" id="349161"/>
    <lineage>
        <taxon>Bacteria</taxon>
        <taxon>Bacillati</taxon>
        <taxon>Bacillota</taxon>
        <taxon>Clostridia</taxon>
        <taxon>Eubacteriales</taxon>
        <taxon>Peptococcaceae</taxon>
        <taxon>Desulforamulus</taxon>
    </lineage>
</organism>
<name>ADEC_DESRM</name>
<reference key="1">
    <citation type="submission" date="2007-03" db="EMBL/GenBank/DDBJ databases">
        <title>Complete sequence of Desulfotomaculum reducens MI-1.</title>
        <authorList>
            <consortium name="US DOE Joint Genome Institute"/>
            <person name="Copeland A."/>
            <person name="Lucas S."/>
            <person name="Lapidus A."/>
            <person name="Barry K."/>
            <person name="Detter J.C."/>
            <person name="Glavina del Rio T."/>
            <person name="Hammon N."/>
            <person name="Israni S."/>
            <person name="Dalin E."/>
            <person name="Tice H."/>
            <person name="Pitluck S."/>
            <person name="Sims D."/>
            <person name="Brettin T."/>
            <person name="Bruce D."/>
            <person name="Han C."/>
            <person name="Tapia R."/>
            <person name="Schmutz J."/>
            <person name="Larimer F."/>
            <person name="Land M."/>
            <person name="Hauser L."/>
            <person name="Kyrpides N."/>
            <person name="Kim E."/>
            <person name="Tebo B.M."/>
            <person name="Richardson P."/>
        </authorList>
    </citation>
    <scope>NUCLEOTIDE SEQUENCE [LARGE SCALE GENOMIC DNA]</scope>
    <source>
        <strain>ATCC BAA-1160 / DSM 100696 / MI-1</strain>
    </source>
</reference>
<comment type="catalytic activity">
    <reaction evidence="1">
        <text>adenine + H2O + H(+) = hypoxanthine + NH4(+)</text>
        <dbReference type="Rhea" id="RHEA:23688"/>
        <dbReference type="ChEBI" id="CHEBI:15377"/>
        <dbReference type="ChEBI" id="CHEBI:15378"/>
        <dbReference type="ChEBI" id="CHEBI:16708"/>
        <dbReference type="ChEBI" id="CHEBI:17368"/>
        <dbReference type="ChEBI" id="CHEBI:28938"/>
        <dbReference type="EC" id="3.5.4.2"/>
    </reaction>
</comment>
<comment type="cofactor">
    <cofactor evidence="1">
        <name>Mn(2+)</name>
        <dbReference type="ChEBI" id="CHEBI:29035"/>
    </cofactor>
</comment>
<comment type="similarity">
    <text evidence="1">Belongs to the metallo-dependent hydrolases superfamily. Adenine deaminase family.</text>
</comment>
<sequence length="588" mass="63394">MLGDVASLAEELRVAAGQEPADLYIKNIQIVDVYTETIFSGSLVIKNGKIVAVNPGWEVEAKEVFDGKGRFAVPGFMDAHIHIEPTLLSPEALASVIVPWGTTTLFADPMEIANVAGLKGVEALLNNTENLPYQIYIEVPSRVPTAPGLETTGGVLGVKEVDQLLQSNISASLGELDPSKILSIKEEYLAKIVSARANGKVANGHAIGLNWDQLNVYATAGLSDDHESVVFQELFERLRLGIKALVREGSTERNVEALVKGAIEQNLSTENLIFCTDDKHVNDIVREGHISFNVQKAIALGLNPIKAIQMATINTAKHFRLDHYLGALTPGKVADIVLLDDLVEIKPAYVFKNGKLVAQGGKLTQQIEISQYPAFLNETVKLPPNLAPTSFALPSQGNRCKVNVINLYPDQIINFASQEWLNVAGGEVQVNTNEDILKLAVVERYGKNGSVGVGFVRGFKLKAGALASSVSHDHHNIVIVGTNDQDMDLAAREIARHQGGLVAVENGQVIGVLPLPIGGLMSSLPAEQVMSQIDQLNKKAEQLGCDLPAPFMTLSFISLPTVPELGLTDCGLIHVLEHRIIPTVVETE</sequence>
<evidence type="ECO:0000255" key="1">
    <source>
        <dbReference type="HAMAP-Rule" id="MF_01518"/>
    </source>
</evidence>
<gene>
    <name evidence="1" type="primary">ade</name>
    <name type="ordered locus">Dred_2771</name>
</gene>
<accession>A4J872</accession>